<sequence>MKLLHIDSSVLAEHSVSRQLTARIVTEWQATHPGTAVEYLDLAQDTPATLSGAELAARMTPADSRSAEQTAAAARTEAFLQQFLAANVIVVGAPMYNFSIPSQLKNWIDCIAQAGRTFKYTETGPVGLAGNKTVIVASSRGGVYSTSEALRALDHQESYLRTVLGFMGIDNVRIVRAEGVNQGADRRSQALAAAEADIATLV</sequence>
<comment type="function">
    <text evidence="1">Quinone reductase that provides resistance to thiol-specific stress caused by electrophilic quinones.</text>
</comment>
<comment type="function">
    <text evidence="1">Also exhibits azoreductase activity. Catalyzes the reductive cleavage of the azo bond in aromatic azo compounds to the corresponding amines.</text>
</comment>
<comment type="catalytic activity">
    <reaction evidence="1">
        <text>2 a quinone + NADH + H(+) = 2 a 1,4-benzosemiquinone + NAD(+)</text>
        <dbReference type="Rhea" id="RHEA:65952"/>
        <dbReference type="ChEBI" id="CHEBI:15378"/>
        <dbReference type="ChEBI" id="CHEBI:57540"/>
        <dbReference type="ChEBI" id="CHEBI:57945"/>
        <dbReference type="ChEBI" id="CHEBI:132124"/>
        <dbReference type="ChEBI" id="CHEBI:134225"/>
    </reaction>
</comment>
<comment type="catalytic activity">
    <reaction evidence="1">
        <text>N,N-dimethyl-1,4-phenylenediamine + anthranilate + 2 NAD(+) = 2-(4-dimethylaminophenyl)diazenylbenzoate + 2 NADH + 2 H(+)</text>
        <dbReference type="Rhea" id="RHEA:55872"/>
        <dbReference type="ChEBI" id="CHEBI:15378"/>
        <dbReference type="ChEBI" id="CHEBI:15783"/>
        <dbReference type="ChEBI" id="CHEBI:16567"/>
        <dbReference type="ChEBI" id="CHEBI:57540"/>
        <dbReference type="ChEBI" id="CHEBI:57945"/>
        <dbReference type="ChEBI" id="CHEBI:71579"/>
        <dbReference type="EC" id="1.7.1.17"/>
    </reaction>
</comment>
<comment type="cofactor">
    <cofactor evidence="1">
        <name>FMN</name>
        <dbReference type="ChEBI" id="CHEBI:58210"/>
    </cofactor>
    <text evidence="1">Binds 1 FMN per subunit.</text>
</comment>
<comment type="subunit">
    <text evidence="1">Homodimer.</text>
</comment>
<comment type="similarity">
    <text evidence="1">Belongs to the azoreductase type 1 family.</text>
</comment>
<evidence type="ECO:0000255" key="1">
    <source>
        <dbReference type="HAMAP-Rule" id="MF_01216"/>
    </source>
</evidence>
<keyword id="KW-0285">Flavoprotein</keyword>
<keyword id="KW-0288">FMN</keyword>
<keyword id="KW-0520">NAD</keyword>
<keyword id="KW-0560">Oxidoreductase</keyword>
<keyword id="KW-1185">Reference proteome</keyword>
<protein>
    <recommendedName>
        <fullName evidence="1">FMN-dependent NADH:quinone oxidoreductase</fullName>
        <ecNumber evidence="1">1.6.5.-</ecNumber>
    </recommendedName>
    <alternativeName>
        <fullName evidence="1">Azo-dye reductase</fullName>
    </alternativeName>
    <alternativeName>
        <fullName evidence="1">FMN-dependent NADH-azo compound oxidoreductase</fullName>
    </alternativeName>
    <alternativeName>
        <fullName evidence="1">FMN-dependent NADH-azoreductase</fullName>
        <ecNumber evidence="1">1.7.1.17</ecNumber>
    </alternativeName>
</protein>
<accession>C1D6X4</accession>
<proteinExistence type="inferred from homology"/>
<reference key="1">
    <citation type="journal article" date="2009" name="PLoS Genet.">
        <title>The complete genome and proteome of Laribacter hongkongensis reveal potential mechanisms for adaptations to different temperatures and habitats.</title>
        <authorList>
            <person name="Woo P.C.Y."/>
            <person name="Lau S.K.P."/>
            <person name="Tse H."/>
            <person name="Teng J.L.L."/>
            <person name="Curreem S.O."/>
            <person name="Tsang A.K.L."/>
            <person name="Fan R.Y.Y."/>
            <person name="Wong G.K.M."/>
            <person name="Huang Y."/>
            <person name="Loman N.J."/>
            <person name="Snyder L.A.S."/>
            <person name="Cai J.J."/>
            <person name="Huang J.-D."/>
            <person name="Mak W."/>
            <person name="Pallen M.J."/>
            <person name="Lok S."/>
            <person name="Yuen K.-Y."/>
        </authorList>
    </citation>
    <scope>NUCLEOTIDE SEQUENCE [LARGE SCALE GENOMIC DNA]</scope>
    <source>
        <strain>HLHK9</strain>
    </source>
</reference>
<dbReference type="EC" id="1.6.5.-" evidence="1"/>
<dbReference type="EC" id="1.7.1.17" evidence="1"/>
<dbReference type="EMBL" id="CP001154">
    <property type="protein sequence ID" value="ACO76224.1"/>
    <property type="molecule type" value="Genomic_DNA"/>
</dbReference>
<dbReference type="RefSeq" id="WP_012698687.1">
    <property type="nucleotide sequence ID" value="NC_012559.1"/>
</dbReference>
<dbReference type="SMR" id="C1D6X4"/>
<dbReference type="STRING" id="557598.LHK_03247"/>
<dbReference type="KEGG" id="lhk:LHK_03247"/>
<dbReference type="eggNOG" id="COG1182">
    <property type="taxonomic scope" value="Bacteria"/>
</dbReference>
<dbReference type="HOGENOM" id="CLU_088964_0_0_4"/>
<dbReference type="Proteomes" id="UP000002010">
    <property type="component" value="Chromosome"/>
</dbReference>
<dbReference type="GO" id="GO:0009055">
    <property type="term" value="F:electron transfer activity"/>
    <property type="evidence" value="ECO:0007669"/>
    <property type="project" value="UniProtKB-UniRule"/>
</dbReference>
<dbReference type="GO" id="GO:0010181">
    <property type="term" value="F:FMN binding"/>
    <property type="evidence" value="ECO:0007669"/>
    <property type="project" value="UniProtKB-UniRule"/>
</dbReference>
<dbReference type="GO" id="GO:0016652">
    <property type="term" value="F:oxidoreductase activity, acting on NAD(P)H as acceptor"/>
    <property type="evidence" value="ECO:0007669"/>
    <property type="project" value="UniProtKB-UniRule"/>
</dbReference>
<dbReference type="GO" id="GO:0016655">
    <property type="term" value="F:oxidoreductase activity, acting on NAD(P)H, quinone or similar compound as acceptor"/>
    <property type="evidence" value="ECO:0007669"/>
    <property type="project" value="InterPro"/>
</dbReference>
<dbReference type="Gene3D" id="3.40.50.360">
    <property type="match status" value="1"/>
</dbReference>
<dbReference type="HAMAP" id="MF_01216">
    <property type="entry name" value="Azoreductase_type1"/>
    <property type="match status" value="1"/>
</dbReference>
<dbReference type="InterPro" id="IPR003680">
    <property type="entry name" value="Flavodoxin_fold"/>
</dbReference>
<dbReference type="InterPro" id="IPR029039">
    <property type="entry name" value="Flavoprotein-like_sf"/>
</dbReference>
<dbReference type="InterPro" id="IPR050104">
    <property type="entry name" value="FMN-dep_NADH:Q_OxRdtase_AzoR1"/>
</dbReference>
<dbReference type="InterPro" id="IPR023048">
    <property type="entry name" value="NADH:quinone_OxRdtase_FMN_depd"/>
</dbReference>
<dbReference type="PANTHER" id="PTHR43741">
    <property type="entry name" value="FMN-DEPENDENT NADH-AZOREDUCTASE 1"/>
    <property type="match status" value="1"/>
</dbReference>
<dbReference type="PANTHER" id="PTHR43741:SF4">
    <property type="entry name" value="FMN-DEPENDENT NADH:QUINONE OXIDOREDUCTASE"/>
    <property type="match status" value="1"/>
</dbReference>
<dbReference type="Pfam" id="PF02525">
    <property type="entry name" value="Flavodoxin_2"/>
    <property type="match status" value="1"/>
</dbReference>
<dbReference type="SUPFAM" id="SSF52218">
    <property type="entry name" value="Flavoproteins"/>
    <property type="match status" value="1"/>
</dbReference>
<gene>
    <name evidence="1" type="primary">azoR</name>
    <name type="ordered locus">LHK_03247</name>
</gene>
<feature type="chain" id="PRO_1000164757" description="FMN-dependent NADH:quinone oxidoreductase">
    <location>
        <begin position="1"/>
        <end position="202"/>
    </location>
</feature>
<feature type="binding site" evidence="1">
    <location>
        <position position="9"/>
    </location>
    <ligand>
        <name>FMN</name>
        <dbReference type="ChEBI" id="CHEBI:58210"/>
    </ligand>
</feature>
<feature type="binding site" evidence="1">
    <location>
        <begin position="15"/>
        <end position="17"/>
    </location>
    <ligand>
        <name>FMN</name>
        <dbReference type="ChEBI" id="CHEBI:58210"/>
    </ligand>
</feature>
<feature type="binding site" evidence="1">
    <location>
        <begin position="95"/>
        <end position="98"/>
    </location>
    <ligand>
        <name>FMN</name>
        <dbReference type="ChEBI" id="CHEBI:58210"/>
    </ligand>
</feature>
<feature type="binding site" evidence="1">
    <location>
        <begin position="139"/>
        <end position="142"/>
    </location>
    <ligand>
        <name>FMN</name>
        <dbReference type="ChEBI" id="CHEBI:58210"/>
    </ligand>
</feature>
<name>AZOR_LARHH</name>
<organism>
    <name type="scientific">Laribacter hongkongensis (strain HLHK9)</name>
    <dbReference type="NCBI Taxonomy" id="557598"/>
    <lineage>
        <taxon>Bacteria</taxon>
        <taxon>Pseudomonadati</taxon>
        <taxon>Pseudomonadota</taxon>
        <taxon>Betaproteobacteria</taxon>
        <taxon>Neisseriales</taxon>
        <taxon>Aquaspirillaceae</taxon>
        <taxon>Laribacter</taxon>
    </lineage>
</organism>